<protein>
    <recommendedName>
        <fullName evidence="1">Glutamyl-tRNA(Gln) amidotransferase subunit A</fullName>
        <shortName evidence="1">Glu-ADT subunit A</shortName>
        <ecNumber evidence="1">6.3.5.7</ecNumber>
    </recommendedName>
</protein>
<dbReference type="EC" id="6.3.5.7" evidence="1"/>
<dbReference type="EMBL" id="CP001052">
    <property type="protein sequence ID" value="ACD14753.1"/>
    <property type="molecule type" value="Genomic_DNA"/>
</dbReference>
<dbReference type="RefSeq" id="WP_012431397.1">
    <property type="nucleotide sequence ID" value="NC_010681.1"/>
</dbReference>
<dbReference type="SMR" id="B2T1M4"/>
<dbReference type="STRING" id="398527.Bphyt_0328"/>
<dbReference type="KEGG" id="bpy:Bphyt_0328"/>
<dbReference type="eggNOG" id="COG0154">
    <property type="taxonomic scope" value="Bacteria"/>
</dbReference>
<dbReference type="HOGENOM" id="CLU_009600_0_3_4"/>
<dbReference type="OrthoDB" id="9811471at2"/>
<dbReference type="Proteomes" id="UP000001739">
    <property type="component" value="Chromosome 1"/>
</dbReference>
<dbReference type="GO" id="GO:0030956">
    <property type="term" value="C:glutamyl-tRNA(Gln) amidotransferase complex"/>
    <property type="evidence" value="ECO:0007669"/>
    <property type="project" value="InterPro"/>
</dbReference>
<dbReference type="GO" id="GO:0005524">
    <property type="term" value="F:ATP binding"/>
    <property type="evidence" value="ECO:0007669"/>
    <property type="project" value="UniProtKB-KW"/>
</dbReference>
<dbReference type="GO" id="GO:0050567">
    <property type="term" value="F:glutaminyl-tRNA synthase (glutamine-hydrolyzing) activity"/>
    <property type="evidence" value="ECO:0007669"/>
    <property type="project" value="UniProtKB-UniRule"/>
</dbReference>
<dbReference type="GO" id="GO:0006412">
    <property type="term" value="P:translation"/>
    <property type="evidence" value="ECO:0007669"/>
    <property type="project" value="UniProtKB-UniRule"/>
</dbReference>
<dbReference type="Gene3D" id="3.90.1300.10">
    <property type="entry name" value="Amidase signature (AS) domain"/>
    <property type="match status" value="1"/>
</dbReference>
<dbReference type="HAMAP" id="MF_00120">
    <property type="entry name" value="GatA"/>
    <property type="match status" value="1"/>
</dbReference>
<dbReference type="InterPro" id="IPR000120">
    <property type="entry name" value="Amidase"/>
</dbReference>
<dbReference type="InterPro" id="IPR020556">
    <property type="entry name" value="Amidase_CS"/>
</dbReference>
<dbReference type="InterPro" id="IPR023631">
    <property type="entry name" value="Amidase_dom"/>
</dbReference>
<dbReference type="InterPro" id="IPR036928">
    <property type="entry name" value="AS_sf"/>
</dbReference>
<dbReference type="InterPro" id="IPR004412">
    <property type="entry name" value="GatA"/>
</dbReference>
<dbReference type="NCBIfam" id="TIGR00132">
    <property type="entry name" value="gatA"/>
    <property type="match status" value="1"/>
</dbReference>
<dbReference type="PANTHER" id="PTHR11895:SF151">
    <property type="entry name" value="GLUTAMYL-TRNA(GLN) AMIDOTRANSFERASE SUBUNIT A"/>
    <property type="match status" value="1"/>
</dbReference>
<dbReference type="PANTHER" id="PTHR11895">
    <property type="entry name" value="TRANSAMIDASE"/>
    <property type="match status" value="1"/>
</dbReference>
<dbReference type="Pfam" id="PF01425">
    <property type="entry name" value="Amidase"/>
    <property type="match status" value="1"/>
</dbReference>
<dbReference type="SUPFAM" id="SSF75304">
    <property type="entry name" value="Amidase signature (AS) enzymes"/>
    <property type="match status" value="1"/>
</dbReference>
<dbReference type="PROSITE" id="PS00571">
    <property type="entry name" value="AMIDASES"/>
    <property type="match status" value="1"/>
</dbReference>
<comment type="function">
    <text evidence="1">Allows the formation of correctly charged Gln-tRNA(Gln) through the transamidation of misacylated Glu-tRNA(Gln) in organisms which lack glutaminyl-tRNA synthetase. The reaction takes place in the presence of glutamine and ATP through an activated gamma-phospho-Glu-tRNA(Gln).</text>
</comment>
<comment type="catalytic activity">
    <reaction evidence="1">
        <text>L-glutamyl-tRNA(Gln) + L-glutamine + ATP + H2O = L-glutaminyl-tRNA(Gln) + L-glutamate + ADP + phosphate + H(+)</text>
        <dbReference type="Rhea" id="RHEA:17521"/>
        <dbReference type="Rhea" id="RHEA-COMP:9681"/>
        <dbReference type="Rhea" id="RHEA-COMP:9684"/>
        <dbReference type="ChEBI" id="CHEBI:15377"/>
        <dbReference type="ChEBI" id="CHEBI:15378"/>
        <dbReference type="ChEBI" id="CHEBI:29985"/>
        <dbReference type="ChEBI" id="CHEBI:30616"/>
        <dbReference type="ChEBI" id="CHEBI:43474"/>
        <dbReference type="ChEBI" id="CHEBI:58359"/>
        <dbReference type="ChEBI" id="CHEBI:78520"/>
        <dbReference type="ChEBI" id="CHEBI:78521"/>
        <dbReference type="ChEBI" id="CHEBI:456216"/>
        <dbReference type="EC" id="6.3.5.7"/>
    </reaction>
</comment>
<comment type="subunit">
    <text evidence="1">Heterotrimer of A, B and C subunits.</text>
</comment>
<comment type="similarity">
    <text evidence="1">Belongs to the amidase family. GatA subfamily.</text>
</comment>
<keyword id="KW-0067">ATP-binding</keyword>
<keyword id="KW-0436">Ligase</keyword>
<keyword id="KW-0547">Nucleotide-binding</keyword>
<keyword id="KW-0648">Protein biosynthesis</keyword>
<gene>
    <name evidence="1" type="primary">gatA</name>
    <name type="ordered locus">Bphyt_0328</name>
</gene>
<sequence>MHEKSLTELRAALTAKECSAVELAQLYLKRIDAANSLNAFIQVDPDLTLAQAKAADALLHTGHAGPLVGLPIAHKDVFVTKGWRSTAGSKMLSNYESPFDATVVARLQNAGMVCVGKTNMDEFAMGSSNENSYFGPVQNPWDVKAVPGGSSGGSAAAVAARLAPAATGTDTGGSIRQPASFSGITGIKPTYGRVSRYGMIAFASSLDQGGPMAQSAADCATLLNAMAGFDERDSTSLVRDDEDYTRYLGKPWKEESAAKPLAGLRIGLPKEYFGAGLADDVRASVDAALKQYEALGATLVDVSLPKTELSIPVYYVIAPAEASSNLSRFDGVRFGHRAAEYRDLLDMYKKSRAEGFGPEVKRRILVGAYVLSHGYYDAYYLQAQKIRRIIAQDFQEAFKQCDVIMGPVAPSVAWDLGAKGDDPVQMYLADIYTLSVSLAGLPGMSVPCGFGAGANAQRPVGLQIIGNYFNEARMLQVADAFQRATDWHRKAPAGV</sequence>
<name>GATA_PARPJ</name>
<organism>
    <name type="scientific">Paraburkholderia phytofirmans (strain DSM 17436 / LMG 22146 / PsJN)</name>
    <name type="common">Burkholderia phytofirmans</name>
    <dbReference type="NCBI Taxonomy" id="398527"/>
    <lineage>
        <taxon>Bacteria</taxon>
        <taxon>Pseudomonadati</taxon>
        <taxon>Pseudomonadota</taxon>
        <taxon>Betaproteobacteria</taxon>
        <taxon>Burkholderiales</taxon>
        <taxon>Burkholderiaceae</taxon>
        <taxon>Paraburkholderia</taxon>
    </lineage>
</organism>
<accession>B2T1M4</accession>
<feature type="chain" id="PRO_1000095116" description="Glutamyl-tRNA(Gln) amidotransferase subunit A">
    <location>
        <begin position="1"/>
        <end position="495"/>
    </location>
</feature>
<feature type="active site" description="Charge relay system" evidence="1">
    <location>
        <position position="75"/>
    </location>
</feature>
<feature type="active site" description="Charge relay system" evidence="1">
    <location>
        <position position="150"/>
    </location>
</feature>
<feature type="active site" description="Acyl-ester intermediate" evidence="1">
    <location>
        <position position="174"/>
    </location>
</feature>
<proteinExistence type="inferred from homology"/>
<evidence type="ECO:0000255" key="1">
    <source>
        <dbReference type="HAMAP-Rule" id="MF_00120"/>
    </source>
</evidence>
<reference key="1">
    <citation type="journal article" date="2011" name="J. Bacteriol.">
        <title>Complete genome sequence of the plant growth-promoting endophyte Burkholderia phytofirmans strain PsJN.</title>
        <authorList>
            <person name="Weilharter A."/>
            <person name="Mitter B."/>
            <person name="Shin M.V."/>
            <person name="Chain P.S."/>
            <person name="Nowak J."/>
            <person name="Sessitsch A."/>
        </authorList>
    </citation>
    <scope>NUCLEOTIDE SEQUENCE [LARGE SCALE GENOMIC DNA]</scope>
    <source>
        <strain>DSM 17436 / LMG 22146 / PsJN</strain>
    </source>
</reference>